<sequence>MAHKKGVGSSRNGRESHSKRLGVKLFGGQAAIAGNIIVRQRGTQHHPGENVGIGKDHTLFALTDGVVTFRKGRQDRSFVSVLPVAEAKA</sequence>
<feature type="chain" id="PRO_1000017462" description="Large ribosomal subunit protein bL27">
    <location>
        <begin position="1"/>
        <end position="89"/>
    </location>
</feature>
<gene>
    <name evidence="1" type="primary">rpmA</name>
    <name type="ordered locus">CHU_0454</name>
</gene>
<name>RL27_CYTH3</name>
<protein>
    <recommendedName>
        <fullName evidence="1">Large ribosomal subunit protein bL27</fullName>
    </recommendedName>
    <alternativeName>
        <fullName evidence="2">50S ribosomal protein L27</fullName>
    </alternativeName>
</protein>
<comment type="similarity">
    <text evidence="1">Belongs to the bacterial ribosomal protein bL27 family.</text>
</comment>
<keyword id="KW-1185">Reference proteome</keyword>
<keyword id="KW-0687">Ribonucleoprotein</keyword>
<keyword id="KW-0689">Ribosomal protein</keyword>
<evidence type="ECO:0000255" key="1">
    <source>
        <dbReference type="HAMAP-Rule" id="MF_00539"/>
    </source>
</evidence>
<evidence type="ECO:0000305" key="2"/>
<organism>
    <name type="scientific">Cytophaga hutchinsonii (strain ATCC 33406 / DSM 1761 / CIP 103989 / NBRC 15051 / NCIMB 9469 / D465)</name>
    <dbReference type="NCBI Taxonomy" id="269798"/>
    <lineage>
        <taxon>Bacteria</taxon>
        <taxon>Pseudomonadati</taxon>
        <taxon>Bacteroidota</taxon>
        <taxon>Cytophagia</taxon>
        <taxon>Cytophagales</taxon>
        <taxon>Cytophagaceae</taxon>
        <taxon>Cytophaga</taxon>
    </lineage>
</organism>
<dbReference type="EMBL" id="CP000383">
    <property type="protein sequence ID" value="ABG57743.1"/>
    <property type="molecule type" value="Genomic_DNA"/>
</dbReference>
<dbReference type="RefSeq" id="WP_011583859.1">
    <property type="nucleotide sequence ID" value="NC_008255.1"/>
</dbReference>
<dbReference type="SMR" id="Q11XX3"/>
<dbReference type="STRING" id="269798.CHU_0454"/>
<dbReference type="KEGG" id="chu:CHU_0454"/>
<dbReference type="eggNOG" id="COG0211">
    <property type="taxonomic scope" value="Bacteria"/>
</dbReference>
<dbReference type="HOGENOM" id="CLU_095424_4_0_10"/>
<dbReference type="OrthoDB" id="9803474at2"/>
<dbReference type="Proteomes" id="UP000001822">
    <property type="component" value="Chromosome"/>
</dbReference>
<dbReference type="GO" id="GO:0022625">
    <property type="term" value="C:cytosolic large ribosomal subunit"/>
    <property type="evidence" value="ECO:0007669"/>
    <property type="project" value="TreeGrafter"/>
</dbReference>
<dbReference type="GO" id="GO:0003735">
    <property type="term" value="F:structural constituent of ribosome"/>
    <property type="evidence" value="ECO:0007669"/>
    <property type="project" value="InterPro"/>
</dbReference>
<dbReference type="GO" id="GO:0006412">
    <property type="term" value="P:translation"/>
    <property type="evidence" value="ECO:0007669"/>
    <property type="project" value="UniProtKB-UniRule"/>
</dbReference>
<dbReference type="FunFam" id="2.40.50.100:FF:000020">
    <property type="entry name" value="50S ribosomal protein L27"/>
    <property type="match status" value="1"/>
</dbReference>
<dbReference type="Gene3D" id="2.40.50.100">
    <property type="match status" value="1"/>
</dbReference>
<dbReference type="HAMAP" id="MF_00539">
    <property type="entry name" value="Ribosomal_bL27"/>
    <property type="match status" value="1"/>
</dbReference>
<dbReference type="InterPro" id="IPR001684">
    <property type="entry name" value="Ribosomal_bL27"/>
</dbReference>
<dbReference type="InterPro" id="IPR018261">
    <property type="entry name" value="Ribosomal_bL27_CS"/>
</dbReference>
<dbReference type="NCBIfam" id="TIGR00062">
    <property type="entry name" value="L27"/>
    <property type="match status" value="1"/>
</dbReference>
<dbReference type="PANTHER" id="PTHR15893:SF0">
    <property type="entry name" value="LARGE RIBOSOMAL SUBUNIT PROTEIN BL27M"/>
    <property type="match status" value="1"/>
</dbReference>
<dbReference type="PANTHER" id="PTHR15893">
    <property type="entry name" value="RIBOSOMAL PROTEIN L27"/>
    <property type="match status" value="1"/>
</dbReference>
<dbReference type="Pfam" id="PF01016">
    <property type="entry name" value="Ribosomal_L27"/>
    <property type="match status" value="1"/>
</dbReference>
<dbReference type="PRINTS" id="PR00063">
    <property type="entry name" value="RIBOSOMALL27"/>
</dbReference>
<dbReference type="SUPFAM" id="SSF110324">
    <property type="entry name" value="Ribosomal L27 protein-like"/>
    <property type="match status" value="1"/>
</dbReference>
<dbReference type="PROSITE" id="PS00831">
    <property type="entry name" value="RIBOSOMAL_L27"/>
    <property type="match status" value="1"/>
</dbReference>
<reference key="1">
    <citation type="journal article" date="2007" name="Appl. Environ. Microbiol.">
        <title>Genome sequence of the cellulolytic gliding bacterium Cytophaga hutchinsonii.</title>
        <authorList>
            <person name="Xie G."/>
            <person name="Bruce D.C."/>
            <person name="Challacombe J.F."/>
            <person name="Chertkov O."/>
            <person name="Detter J.C."/>
            <person name="Gilna P."/>
            <person name="Han C.S."/>
            <person name="Lucas S."/>
            <person name="Misra M."/>
            <person name="Myers G.L."/>
            <person name="Richardson P."/>
            <person name="Tapia R."/>
            <person name="Thayer N."/>
            <person name="Thompson L.S."/>
            <person name="Brettin T.S."/>
            <person name="Henrissat B."/>
            <person name="Wilson D.B."/>
            <person name="McBride M.J."/>
        </authorList>
    </citation>
    <scope>NUCLEOTIDE SEQUENCE [LARGE SCALE GENOMIC DNA]</scope>
    <source>
        <strain>ATCC 33406 / DSM 1761 / JCM 20678 / CIP 103989 / IAM 12607 / NBRC 15051 / NCIMB 9469 / D465</strain>
    </source>
</reference>
<accession>Q11XX3</accession>
<proteinExistence type="inferred from homology"/>